<sequence>MIIEGPVIKFGDKIDTDIIIPARYLKYTDPQYLAQHAMEPLDPEFYKKASKGVIIVAGKVFGMGSSREQAAIALKAAGVKAVVAESFARIFYRNAINNGLPVITLPNSTKEIDENSYVKIDVETGEILVGNKVLKGKGITGMALEILQAGGIMEYLKKMQTVNRN</sequence>
<comment type="function">
    <text evidence="1">Catalyzes the isomerization between 2-isopropylmalate and 3-isopropylmalate, via the formation of 2-isopropylmaleate.</text>
</comment>
<comment type="catalytic activity">
    <reaction evidence="1">
        <text>(2R,3S)-3-isopropylmalate = (2S)-2-isopropylmalate</text>
        <dbReference type="Rhea" id="RHEA:32287"/>
        <dbReference type="ChEBI" id="CHEBI:1178"/>
        <dbReference type="ChEBI" id="CHEBI:35121"/>
        <dbReference type="EC" id="4.2.1.33"/>
    </reaction>
</comment>
<comment type="pathway">
    <text evidence="1">Amino-acid biosynthesis; L-leucine biosynthesis; L-leucine from 3-methyl-2-oxobutanoate: step 2/4.</text>
</comment>
<comment type="subunit">
    <text evidence="1">Heterodimer of LeuC and LeuD.</text>
</comment>
<comment type="similarity">
    <text evidence="1">Belongs to the LeuD family. LeuD type 2 subfamily.</text>
</comment>
<reference key="1">
    <citation type="journal article" date="2009" name="Proc. Natl. Acad. Sci. U.S.A.">
        <title>Biogeography of the Sulfolobus islandicus pan-genome.</title>
        <authorList>
            <person name="Reno M.L."/>
            <person name="Held N.L."/>
            <person name="Fields C.J."/>
            <person name="Burke P.V."/>
            <person name="Whitaker R.J."/>
        </authorList>
    </citation>
    <scope>NUCLEOTIDE SEQUENCE [LARGE SCALE GENOMIC DNA]</scope>
    <source>
        <strain>M.16.4 / Kamchatka #3</strain>
    </source>
</reference>
<feature type="chain" id="PRO_1000213369" description="3-isopropylmalate dehydratase small subunit">
    <location>
        <begin position="1"/>
        <end position="165"/>
    </location>
</feature>
<dbReference type="EC" id="4.2.1.33" evidence="1"/>
<dbReference type="EMBL" id="CP001402">
    <property type="protein sequence ID" value="ACR40910.1"/>
    <property type="molecule type" value="Genomic_DNA"/>
</dbReference>
<dbReference type="RefSeq" id="WP_012710429.1">
    <property type="nucleotide sequence ID" value="NC_012726.1"/>
</dbReference>
<dbReference type="SMR" id="C4KKU5"/>
<dbReference type="KEGG" id="sid:M164_0276"/>
<dbReference type="HOGENOM" id="CLU_081378_1_1_2"/>
<dbReference type="UniPathway" id="UPA00048">
    <property type="reaction ID" value="UER00071"/>
</dbReference>
<dbReference type="Proteomes" id="UP000001479">
    <property type="component" value="Chromosome"/>
</dbReference>
<dbReference type="GO" id="GO:0003861">
    <property type="term" value="F:3-isopropylmalate dehydratase activity"/>
    <property type="evidence" value="ECO:0007669"/>
    <property type="project" value="UniProtKB-UniRule"/>
</dbReference>
<dbReference type="GO" id="GO:0009098">
    <property type="term" value="P:L-leucine biosynthetic process"/>
    <property type="evidence" value="ECO:0007669"/>
    <property type="project" value="UniProtKB-UniRule"/>
</dbReference>
<dbReference type="CDD" id="cd01577">
    <property type="entry name" value="IPMI_Swivel"/>
    <property type="match status" value="1"/>
</dbReference>
<dbReference type="Gene3D" id="3.20.19.10">
    <property type="entry name" value="Aconitase, domain 4"/>
    <property type="match status" value="1"/>
</dbReference>
<dbReference type="HAMAP" id="MF_01032">
    <property type="entry name" value="LeuD_type2"/>
    <property type="match status" value="1"/>
</dbReference>
<dbReference type="InterPro" id="IPR015928">
    <property type="entry name" value="Aconitase/3IPM_dehydase_swvl"/>
</dbReference>
<dbReference type="InterPro" id="IPR000573">
    <property type="entry name" value="AconitaseA/IPMdHydase_ssu_swvl"/>
</dbReference>
<dbReference type="InterPro" id="IPR033940">
    <property type="entry name" value="IPMI_Swivel"/>
</dbReference>
<dbReference type="InterPro" id="IPR050075">
    <property type="entry name" value="LeuD"/>
</dbReference>
<dbReference type="InterPro" id="IPR011827">
    <property type="entry name" value="LeuD_type2/HacB/DmdB"/>
</dbReference>
<dbReference type="NCBIfam" id="TIGR02087">
    <property type="entry name" value="LEUD_arch"/>
    <property type="match status" value="1"/>
</dbReference>
<dbReference type="PANTHER" id="PTHR43345:SF2">
    <property type="entry name" value="3-ISOPROPYLMALATE DEHYDRATASE SMALL SUBUNIT 1"/>
    <property type="match status" value="1"/>
</dbReference>
<dbReference type="PANTHER" id="PTHR43345">
    <property type="entry name" value="3-ISOPROPYLMALATE DEHYDRATASE SMALL SUBUNIT 2-RELATED-RELATED"/>
    <property type="match status" value="1"/>
</dbReference>
<dbReference type="Pfam" id="PF00694">
    <property type="entry name" value="Aconitase_C"/>
    <property type="match status" value="1"/>
</dbReference>
<dbReference type="SUPFAM" id="SSF52016">
    <property type="entry name" value="LeuD/IlvD-like"/>
    <property type="match status" value="1"/>
</dbReference>
<accession>C4KKU5</accession>
<protein>
    <recommendedName>
        <fullName evidence="1">3-isopropylmalate dehydratase small subunit</fullName>
        <ecNumber evidence="1">4.2.1.33</ecNumber>
    </recommendedName>
    <alternativeName>
        <fullName evidence="1">Alpha-IPM isomerase</fullName>
        <shortName evidence="1">IPMI</shortName>
    </alternativeName>
    <alternativeName>
        <fullName evidence="1">Isopropylmalate isomerase</fullName>
    </alternativeName>
</protein>
<name>LEUD_SACI6</name>
<keyword id="KW-0028">Amino-acid biosynthesis</keyword>
<keyword id="KW-0100">Branched-chain amino acid biosynthesis</keyword>
<keyword id="KW-0432">Leucine biosynthesis</keyword>
<keyword id="KW-0456">Lyase</keyword>
<evidence type="ECO:0000255" key="1">
    <source>
        <dbReference type="HAMAP-Rule" id="MF_01032"/>
    </source>
</evidence>
<gene>
    <name evidence="1" type="primary">leuD</name>
    <name type="ordered locus">M164_0276</name>
</gene>
<organism>
    <name type="scientific">Saccharolobus islandicus (strain M.16.4 / Kamchatka #3)</name>
    <name type="common">Sulfolobus islandicus</name>
    <dbReference type="NCBI Taxonomy" id="426118"/>
    <lineage>
        <taxon>Archaea</taxon>
        <taxon>Thermoproteota</taxon>
        <taxon>Thermoprotei</taxon>
        <taxon>Sulfolobales</taxon>
        <taxon>Sulfolobaceae</taxon>
        <taxon>Saccharolobus</taxon>
    </lineage>
</organism>
<proteinExistence type="inferred from homology"/>